<evidence type="ECO:0000255" key="1">
    <source>
        <dbReference type="HAMAP-Rule" id="MF_00484"/>
    </source>
</evidence>
<proteinExistence type="inferred from homology"/>
<feature type="chain" id="PRO_1000206431" description="Glycogen synthase">
    <location>
        <begin position="1"/>
        <end position="475"/>
    </location>
</feature>
<feature type="binding site" evidence="1">
    <location>
        <position position="15"/>
    </location>
    <ligand>
        <name>ADP-alpha-D-glucose</name>
        <dbReference type="ChEBI" id="CHEBI:57498"/>
    </ligand>
</feature>
<comment type="function">
    <text evidence="1">Synthesizes alpha-1,4-glucan chains using ADP-glucose.</text>
</comment>
<comment type="catalytic activity">
    <reaction evidence="1">
        <text>[(1-&gt;4)-alpha-D-glucosyl](n) + ADP-alpha-D-glucose = [(1-&gt;4)-alpha-D-glucosyl](n+1) + ADP + H(+)</text>
        <dbReference type="Rhea" id="RHEA:18189"/>
        <dbReference type="Rhea" id="RHEA-COMP:9584"/>
        <dbReference type="Rhea" id="RHEA-COMP:9587"/>
        <dbReference type="ChEBI" id="CHEBI:15378"/>
        <dbReference type="ChEBI" id="CHEBI:15444"/>
        <dbReference type="ChEBI" id="CHEBI:57498"/>
        <dbReference type="ChEBI" id="CHEBI:456216"/>
        <dbReference type="EC" id="2.4.1.21"/>
    </reaction>
</comment>
<comment type="pathway">
    <text evidence="1">Glycan biosynthesis; glycogen biosynthesis.</text>
</comment>
<comment type="similarity">
    <text evidence="1">Belongs to the glycosyltransferase 1 family. Bacterial/plant glycogen synthase subfamily.</text>
</comment>
<organism>
    <name type="scientific">Kosmotoga olearia (strain ATCC BAA-1733 / DSM 21960 / TBF 19.5.1)</name>
    <dbReference type="NCBI Taxonomy" id="521045"/>
    <lineage>
        <taxon>Bacteria</taxon>
        <taxon>Thermotogati</taxon>
        <taxon>Thermotogota</taxon>
        <taxon>Thermotogae</taxon>
        <taxon>Kosmotogales</taxon>
        <taxon>Kosmotogaceae</taxon>
        <taxon>Kosmotoga</taxon>
    </lineage>
</organism>
<gene>
    <name evidence="1" type="primary">glgA</name>
    <name type="ordered locus">Kole_1922</name>
</gene>
<dbReference type="EC" id="2.4.1.21" evidence="1"/>
<dbReference type="EMBL" id="CP001634">
    <property type="protein sequence ID" value="ACR80603.1"/>
    <property type="molecule type" value="Genomic_DNA"/>
</dbReference>
<dbReference type="RefSeq" id="WP_015869246.1">
    <property type="nucleotide sequence ID" value="NC_012785.1"/>
</dbReference>
<dbReference type="SMR" id="C5CGT4"/>
<dbReference type="STRING" id="521045.Kole_1922"/>
<dbReference type="CAZy" id="GT5">
    <property type="family name" value="Glycosyltransferase Family 5"/>
</dbReference>
<dbReference type="KEGG" id="kol:Kole_1922"/>
<dbReference type="eggNOG" id="COG0297">
    <property type="taxonomic scope" value="Bacteria"/>
</dbReference>
<dbReference type="HOGENOM" id="CLU_009583_18_5_0"/>
<dbReference type="OrthoDB" id="9808590at2"/>
<dbReference type="UniPathway" id="UPA00164"/>
<dbReference type="Proteomes" id="UP000002382">
    <property type="component" value="Chromosome"/>
</dbReference>
<dbReference type="GO" id="GO:0009011">
    <property type="term" value="F:alpha-1,4-glucan glucosyltransferase (ADP-glucose donor) activity"/>
    <property type="evidence" value="ECO:0007669"/>
    <property type="project" value="UniProtKB-UniRule"/>
</dbReference>
<dbReference type="GO" id="GO:0004373">
    <property type="term" value="F:alpha-1,4-glucan glucosyltransferase (UDP-glucose donor) activity"/>
    <property type="evidence" value="ECO:0007669"/>
    <property type="project" value="InterPro"/>
</dbReference>
<dbReference type="GO" id="GO:0005978">
    <property type="term" value="P:glycogen biosynthetic process"/>
    <property type="evidence" value="ECO:0007669"/>
    <property type="project" value="UniProtKB-UniRule"/>
</dbReference>
<dbReference type="CDD" id="cd03791">
    <property type="entry name" value="GT5_Glycogen_synthase_DULL1-like"/>
    <property type="match status" value="1"/>
</dbReference>
<dbReference type="Gene3D" id="3.40.50.2000">
    <property type="entry name" value="Glycogen Phosphorylase B"/>
    <property type="match status" value="2"/>
</dbReference>
<dbReference type="HAMAP" id="MF_00484">
    <property type="entry name" value="Glycogen_synth"/>
    <property type="match status" value="1"/>
</dbReference>
<dbReference type="InterPro" id="IPR001296">
    <property type="entry name" value="Glyco_trans_1"/>
</dbReference>
<dbReference type="InterPro" id="IPR011835">
    <property type="entry name" value="GS/SS"/>
</dbReference>
<dbReference type="InterPro" id="IPR013534">
    <property type="entry name" value="Starch_synth_cat_dom"/>
</dbReference>
<dbReference type="NCBIfam" id="TIGR02095">
    <property type="entry name" value="glgA"/>
    <property type="match status" value="1"/>
</dbReference>
<dbReference type="PANTHER" id="PTHR45825:SF11">
    <property type="entry name" value="ALPHA AMYLASE DOMAIN-CONTAINING PROTEIN"/>
    <property type="match status" value="1"/>
</dbReference>
<dbReference type="PANTHER" id="PTHR45825">
    <property type="entry name" value="GRANULE-BOUND STARCH SYNTHASE 1, CHLOROPLASTIC/AMYLOPLASTIC"/>
    <property type="match status" value="1"/>
</dbReference>
<dbReference type="Pfam" id="PF08323">
    <property type="entry name" value="Glyco_transf_5"/>
    <property type="match status" value="1"/>
</dbReference>
<dbReference type="Pfam" id="PF00534">
    <property type="entry name" value="Glycos_transf_1"/>
    <property type="match status" value="1"/>
</dbReference>
<dbReference type="SUPFAM" id="SSF53756">
    <property type="entry name" value="UDP-Glycosyltransferase/glycogen phosphorylase"/>
    <property type="match status" value="1"/>
</dbReference>
<keyword id="KW-0320">Glycogen biosynthesis</keyword>
<keyword id="KW-0328">Glycosyltransferase</keyword>
<keyword id="KW-1185">Reference proteome</keyword>
<keyword id="KW-0808">Transferase</keyword>
<reference key="1">
    <citation type="submission" date="2009-06" db="EMBL/GenBank/DDBJ databases">
        <title>Complete sequence of Thermotogales bacterium TBF 19.5.1.</title>
        <authorList>
            <consortium name="US DOE Joint Genome Institute"/>
            <person name="Lucas S."/>
            <person name="Copeland A."/>
            <person name="Lapidus A."/>
            <person name="Glavina del Rio T."/>
            <person name="Tice H."/>
            <person name="Bruce D."/>
            <person name="Goodwin L."/>
            <person name="Pitluck S."/>
            <person name="Chertkov O."/>
            <person name="Brettin T."/>
            <person name="Detter J.C."/>
            <person name="Han C."/>
            <person name="Schmutz J."/>
            <person name="Larimer F."/>
            <person name="Land M."/>
            <person name="Hauser L."/>
            <person name="Kyrpides N."/>
            <person name="Ovchinnikova G."/>
            <person name="Noll K."/>
        </authorList>
    </citation>
    <scope>NUCLEOTIDE SEQUENCE [LARGE SCALE GENOMIC DNA]</scope>
    <source>
        <strain>ATCC BAA-1733 / DSM 21960 / TBF 19.5.1</strain>
    </source>
</reference>
<protein>
    <recommendedName>
        <fullName evidence="1">Glycogen synthase</fullName>
        <ecNumber evidence="1">2.4.1.21</ecNumber>
    </recommendedName>
    <alternativeName>
        <fullName evidence="1">Starch [bacterial glycogen] synthase</fullName>
    </alternativeName>
</protein>
<name>GLGA_KOSOT</name>
<accession>C5CGT4</accession>
<sequence length="475" mass="53223">MKILFVSYEVYPLAKVGGLADVAGSLPKYLEKEGVSVQIAMPFHKKVKADNIENTGIVITTKHLPEKYSFEIYKTPLPGSGVPVFLFKNDQLIDSDEVYEGTDLALQAIAFSDAVVKFAETLEPDLLHVNDWQPALIPAYISAFYNGKPKTLLTIHNLGYQGEFDKSYFYKTGLPEKLWQEGKAVKNGAFNFLKTGIVTATAISTVSPTYAKEIQTPEYGAGLDETLRALSDRLFGILNGIDYSEYNPATDKRIPVNFDINSLEKKKENKIALQKELGLPVIDVPVIGLISRLVEQKGFDLIEAAAEKILSNDLQFVVLGTGEERYERLFKSLGERFPEKVSANITFNVDLAQKIYAGSDMFLMPSRYEPCGLGQMFAMRYGTIPVVRFTGGLRDTVKEFNPETLEGNGFGFEEYNPDKLLEAVEKAIKIYENKTLWNQLMLNAMNTDCSWDKSAREYIKLYKHVLNSGRDILNA</sequence>